<protein>
    <recommendedName>
        <fullName evidence="1">Disulfide bond formation protein B</fullName>
    </recommendedName>
    <alternativeName>
        <fullName evidence="1">Disulfide oxidoreductase</fullName>
    </alternativeName>
</protein>
<keyword id="KW-0997">Cell inner membrane</keyword>
<keyword id="KW-1003">Cell membrane</keyword>
<keyword id="KW-0143">Chaperone</keyword>
<keyword id="KW-1015">Disulfide bond</keyword>
<keyword id="KW-0249">Electron transport</keyword>
<keyword id="KW-0472">Membrane</keyword>
<keyword id="KW-0560">Oxidoreductase</keyword>
<keyword id="KW-0676">Redox-active center</keyword>
<keyword id="KW-1185">Reference proteome</keyword>
<keyword id="KW-0812">Transmembrane</keyword>
<keyword id="KW-1133">Transmembrane helix</keyword>
<keyword id="KW-0813">Transport</keyword>
<proteinExistence type="inferred from homology"/>
<organism>
    <name type="scientific">Psychrobacter arcticus (strain DSM 17307 / VKM B-2377 / 273-4)</name>
    <dbReference type="NCBI Taxonomy" id="259536"/>
    <lineage>
        <taxon>Bacteria</taxon>
        <taxon>Pseudomonadati</taxon>
        <taxon>Pseudomonadota</taxon>
        <taxon>Gammaproteobacteria</taxon>
        <taxon>Moraxellales</taxon>
        <taxon>Moraxellaceae</taxon>
        <taxon>Psychrobacter</taxon>
    </lineage>
</organism>
<gene>
    <name evidence="1" type="primary">dsbB</name>
    <name type="ordered locus">Psyc_0034</name>
</gene>
<reference key="1">
    <citation type="journal article" date="2010" name="Appl. Environ. Microbiol.">
        <title>The genome sequence of Psychrobacter arcticus 273-4, a psychroactive Siberian permafrost bacterium, reveals mechanisms for adaptation to low-temperature growth.</title>
        <authorList>
            <person name="Ayala-del-Rio H.L."/>
            <person name="Chain P.S."/>
            <person name="Grzymski J.J."/>
            <person name="Ponder M.A."/>
            <person name="Ivanova N."/>
            <person name="Bergholz P.W."/>
            <person name="Di Bartolo G."/>
            <person name="Hauser L."/>
            <person name="Land M."/>
            <person name="Bakermans C."/>
            <person name="Rodrigues D."/>
            <person name="Klappenbach J."/>
            <person name="Zarka D."/>
            <person name="Larimer F."/>
            <person name="Richardson P."/>
            <person name="Murray A."/>
            <person name="Thomashow M."/>
            <person name="Tiedje J.M."/>
        </authorList>
    </citation>
    <scope>NUCLEOTIDE SEQUENCE [LARGE SCALE GENOMIC DNA]</scope>
    <source>
        <strain>DSM 17307 / VKM B-2377 / 273-4</strain>
    </source>
</reference>
<evidence type="ECO:0000255" key="1">
    <source>
        <dbReference type="HAMAP-Rule" id="MF_00286"/>
    </source>
</evidence>
<accession>Q4FVQ0</accession>
<feature type="chain" id="PRO_0000298396" description="Disulfide bond formation protein B">
    <location>
        <begin position="1"/>
        <end position="176"/>
    </location>
</feature>
<feature type="topological domain" description="Cytoplasmic" evidence="1">
    <location>
        <begin position="1"/>
        <end position="11"/>
    </location>
</feature>
<feature type="transmembrane region" description="Helical" evidence="1">
    <location>
        <begin position="12"/>
        <end position="28"/>
    </location>
</feature>
<feature type="topological domain" description="Periplasmic" evidence="1">
    <location>
        <begin position="29"/>
        <end position="46"/>
    </location>
</feature>
<feature type="transmembrane region" description="Helical" evidence="1">
    <location>
        <begin position="47"/>
        <end position="63"/>
    </location>
</feature>
<feature type="topological domain" description="Cytoplasmic" evidence="1">
    <location>
        <begin position="64"/>
        <end position="70"/>
    </location>
</feature>
<feature type="transmembrane region" description="Helical" evidence="1">
    <location>
        <begin position="71"/>
        <end position="88"/>
    </location>
</feature>
<feature type="topological domain" description="Periplasmic" evidence="1">
    <location>
        <begin position="89"/>
        <end position="145"/>
    </location>
</feature>
<feature type="transmembrane region" description="Helical" evidence="1">
    <location>
        <begin position="146"/>
        <end position="164"/>
    </location>
</feature>
<feature type="topological domain" description="Cytoplasmic" evidence="1">
    <location>
        <begin position="165"/>
        <end position="176"/>
    </location>
</feature>
<feature type="disulfide bond" description="Redox-active" evidence="1">
    <location>
        <begin position="38"/>
        <end position="41"/>
    </location>
</feature>
<feature type="disulfide bond" description="Redox-active" evidence="1">
    <location>
        <begin position="104"/>
        <end position="131"/>
    </location>
</feature>
<name>DSBB_PSYA2</name>
<sequence length="176" mass="19685">MLQLTTYRNLQVFLVIMTAIGMSFALFFLQRYMGFSPCPLCIFQRIGLMIMGGFALIAALFHPKSMVIRLLLWLGSLAGIGWAAIVAGRHVWLQHLPADQVPSCGPGLDYWLDTLPMQQVLKEVFAGSGECASIEWTFLGLSIPEQSLILFSILILTHLLILWRIVRPSTPKPLAR</sequence>
<comment type="function">
    <text evidence="1">Required for disulfide bond formation in some periplasmic proteins. Acts by oxidizing the DsbA protein.</text>
</comment>
<comment type="subcellular location">
    <subcellularLocation>
        <location evidence="1">Cell inner membrane</location>
        <topology evidence="1">Multi-pass membrane protein</topology>
    </subcellularLocation>
</comment>
<comment type="similarity">
    <text evidence="1">Belongs to the DsbB family.</text>
</comment>
<dbReference type="EMBL" id="CP000082">
    <property type="protein sequence ID" value="AAZ17908.1"/>
    <property type="molecule type" value="Genomic_DNA"/>
</dbReference>
<dbReference type="RefSeq" id="WP_011279347.1">
    <property type="nucleotide sequence ID" value="NC_007204.1"/>
</dbReference>
<dbReference type="SMR" id="Q4FVQ0"/>
<dbReference type="STRING" id="259536.Psyc_0034"/>
<dbReference type="KEGG" id="par:Psyc_0034"/>
<dbReference type="eggNOG" id="COG1495">
    <property type="taxonomic scope" value="Bacteria"/>
</dbReference>
<dbReference type="HOGENOM" id="CLU_098660_1_1_6"/>
<dbReference type="OrthoDB" id="3711263at2"/>
<dbReference type="Proteomes" id="UP000000546">
    <property type="component" value="Chromosome"/>
</dbReference>
<dbReference type="GO" id="GO:0005886">
    <property type="term" value="C:plasma membrane"/>
    <property type="evidence" value="ECO:0007669"/>
    <property type="project" value="UniProtKB-SubCell"/>
</dbReference>
<dbReference type="GO" id="GO:0009055">
    <property type="term" value="F:electron transfer activity"/>
    <property type="evidence" value="ECO:0007669"/>
    <property type="project" value="UniProtKB-UniRule"/>
</dbReference>
<dbReference type="GO" id="GO:0015035">
    <property type="term" value="F:protein-disulfide reductase activity"/>
    <property type="evidence" value="ECO:0007669"/>
    <property type="project" value="UniProtKB-UniRule"/>
</dbReference>
<dbReference type="GO" id="GO:0006457">
    <property type="term" value="P:protein folding"/>
    <property type="evidence" value="ECO:0007669"/>
    <property type="project" value="InterPro"/>
</dbReference>
<dbReference type="Gene3D" id="1.20.1550.10">
    <property type="entry name" value="DsbB-like"/>
    <property type="match status" value="1"/>
</dbReference>
<dbReference type="HAMAP" id="MF_00286">
    <property type="entry name" value="DsbB"/>
    <property type="match status" value="1"/>
</dbReference>
<dbReference type="InterPro" id="IPR003752">
    <property type="entry name" value="DiS_bond_form_DsbB/BdbC"/>
</dbReference>
<dbReference type="InterPro" id="IPR022920">
    <property type="entry name" value="Disulphide_bond_form_DsbB"/>
</dbReference>
<dbReference type="InterPro" id="IPR050183">
    <property type="entry name" value="DsbB"/>
</dbReference>
<dbReference type="InterPro" id="IPR023380">
    <property type="entry name" value="DsbB-like_sf"/>
</dbReference>
<dbReference type="PANTHER" id="PTHR36570">
    <property type="entry name" value="DISULFIDE BOND FORMATION PROTEIN B"/>
    <property type="match status" value="1"/>
</dbReference>
<dbReference type="PANTHER" id="PTHR36570:SF3">
    <property type="entry name" value="DISULFIDE BOND FORMATION PROTEIN B"/>
    <property type="match status" value="1"/>
</dbReference>
<dbReference type="Pfam" id="PF02600">
    <property type="entry name" value="DsbB"/>
    <property type="match status" value="1"/>
</dbReference>
<dbReference type="SUPFAM" id="SSF158442">
    <property type="entry name" value="DsbB-like"/>
    <property type="match status" value="1"/>
</dbReference>